<reference key="1">
    <citation type="journal article" date="1993" name="Biochem. Biophys. Res. Commun.">
        <title>Molecular cloning and functional expression of the human gallbladder cholecystokinin A receptor.</title>
        <authorList>
            <person name="Ulrich C.D."/>
            <person name="Ferber I."/>
            <person name="Holicky E."/>
            <person name="Hadac E."/>
            <person name="Buell G."/>
            <person name="Miller L.J."/>
        </authorList>
    </citation>
    <scope>NUCLEOTIDE SEQUENCE [MRNA]</scope>
    <source>
        <tissue>Gall bladder</tissue>
    </source>
</reference>
<reference key="2">
    <citation type="journal article" date="1993" name="Biochem. Biophys. Res. Commun.">
        <title>Molecular cloning, functional expression and chromosomal localization of the human cholecystokinin type A receptor.</title>
        <authorList>
            <person name="Wank S.A."/>
            <person name="de Weerth A."/>
            <person name="Pisegna J.R."/>
            <person name="Huppi K."/>
        </authorList>
    </citation>
    <scope>NUCLEOTIDE SEQUENCE [MRNA]</scope>
</reference>
<reference key="3">
    <citation type="journal article" date="1995" name="Gastroenterology">
        <title>Abnormal processing of the human cholecystokinin receptor gene in association with gallstones and obesity.</title>
        <authorList>
            <person name="Miller L.J."/>
            <person name="Holicky E.L."/>
            <person name="Ulrich C.D."/>
            <person name="Wieben E.D."/>
        </authorList>
    </citation>
    <scope>NUCLEOTIDE SEQUENCE [GENOMIC DNA]</scope>
</reference>
<reference key="4">
    <citation type="journal article" date="2000" name="FEBS Lett.">
        <title>Gene structure of human cholecystokinin (CCK) type-A receptor: body fat content is related to CCK type-A receptor gene promoter polymorphism.</title>
        <authorList>
            <person name="Funakoshi A."/>
            <person name="Miyasaka K."/>
            <person name="Matsumoto H."/>
            <person name="Yamamori S."/>
            <person name="Takiguchi S."/>
            <person name="Kataoka K."/>
            <person name="Takata Y."/>
            <person name="Matsusue K."/>
            <person name="Kono A."/>
            <person name="Shimokata H."/>
        </authorList>
    </citation>
    <scope>NUCLEOTIDE SEQUENCE [GENOMIC DNA]</scope>
    <source>
        <tissue>Peripheral blood leukocyte</tissue>
    </source>
</reference>
<reference key="5">
    <citation type="submission" date="2003-06" db="EMBL/GenBank/DDBJ databases">
        <title>cDNA clones of human proteins involved in signal transduction sequenced by the Guthrie cDNA resource center (www.cdna.org).</title>
        <authorList>
            <person name="Kopatz S.A."/>
            <person name="Aronstam R.S."/>
            <person name="Sharma S.V."/>
        </authorList>
    </citation>
    <scope>NUCLEOTIDE SEQUENCE [LARGE SCALE MRNA]</scope>
    <source>
        <tissue>Stomach</tissue>
    </source>
</reference>
<reference key="6">
    <citation type="journal article" date="2004" name="Nat. Genet.">
        <title>Complete sequencing and characterization of 21,243 full-length human cDNAs.</title>
        <authorList>
            <person name="Ota T."/>
            <person name="Suzuki Y."/>
            <person name="Nishikawa T."/>
            <person name="Otsuki T."/>
            <person name="Sugiyama T."/>
            <person name="Irie R."/>
            <person name="Wakamatsu A."/>
            <person name="Hayashi K."/>
            <person name="Sato H."/>
            <person name="Nagai K."/>
            <person name="Kimura K."/>
            <person name="Makita H."/>
            <person name="Sekine M."/>
            <person name="Obayashi M."/>
            <person name="Nishi T."/>
            <person name="Shibahara T."/>
            <person name="Tanaka T."/>
            <person name="Ishii S."/>
            <person name="Yamamoto J."/>
            <person name="Saito K."/>
            <person name="Kawai Y."/>
            <person name="Isono Y."/>
            <person name="Nakamura Y."/>
            <person name="Nagahari K."/>
            <person name="Murakami K."/>
            <person name="Yasuda T."/>
            <person name="Iwayanagi T."/>
            <person name="Wagatsuma M."/>
            <person name="Shiratori A."/>
            <person name="Sudo H."/>
            <person name="Hosoiri T."/>
            <person name="Kaku Y."/>
            <person name="Kodaira H."/>
            <person name="Kondo H."/>
            <person name="Sugawara M."/>
            <person name="Takahashi M."/>
            <person name="Kanda K."/>
            <person name="Yokoi T."/>
            <person name="Furuya T."/>
            <person name="Kikkawa E."/>
            <person name="Omura Y."/>
            <person name="Abe K."/>
            <person name="Kamihara K."/>
            <person name="Katsuta N."/>
            <person name="Sato K."/>
            <person name="Tanikawa M."/>
            <person name="Yamazaki M."/>
            <person name="Ninomiya K."/>
            <person name="Ishibashi T."/>
            <person name="Yamashita H."/>
            <person name="Murakawa K."/>
            <person name="Fujimori K."/>
            <person name="Tanai H."/>
            <person name="Kimata M."/>
            <person name="Watanabe M."/>
            <person name="Hiraoka S."/>
            <person name="Chiba Y."/>
            <person name="Ishida S."/>
            <person name="Ono Y."/>
            <person name="Takiguchi S."/>
            <person name="Watanabe S."/>
            <person name="Yosida M."/>
            <person name="Hotuta T."/>
            <person name="Kusano J."/>
            <person name="Kanehori K."/>
            <person name="Takahashi-Fujii A."/>
            <person name="Hara H."/>
            <person name="Tanase T.-O."/>
            <person name="Nomura Y."/>
            <person name="Togiya S."/>
            <person name="Komai F."/>
            <person name="Hara R."/>
            <person name="Takeuchi K."/>
            <person name="Arita M."/>
            <person name="Imose N."/>
            <person name="Musashino K."/>
            <person name="Yuuki H."/>
            <person name="Oshima A."/>
            <person name="Sasaki N."/>
            <person name="Aotsuka S."/>
            <person name="Yoshikawa Y."/>
            <person name="Matsunawa H."/>
            <person name="Ichihara T."/>
            <person name="Shiohata N."/>
            <person name="Sano S."/>
            <person name="Moriya S."/>
            <person name="Momiyama H."/>
            <person name="Satoh N."/>
            <person name="Takami S."/>
            <person name="Terashima Y."/>
            <person name="Suzuki O."/>
            <person name="Nakagawa S."/>
            <person name="Senoh A."/>
            <person name="Mizoguchi H."/>
            <person name="Goto Y."/>
            <person name="Shimizu F."/>
            <person name="Wakebe H."/>
            <person name="Hishigaki H."/>
            <person name="Watanabe T."/>
            <person name="Sugiyama A."/>
            <person name="Takemoto M."/>
            <person name="Kawakami B."/>
            <person name="Yamazaki M."/>
            <person name="Watanabe K."/>
            <person name="Kumagai A."/>
            <person name="Itakura S."/>
            <person name="Fukuzumi Y."/>
            <person name="Fujimori Y."/>
            <person name="Komiyama M."/>
            <person name="Tashiro H."/>
            <person name="Tanigami A."/>
            <person name="Fujiwara T."/>
            <person name="Ono T."/>
            <person name="Yamada K."/>
            <person name="Fujii Y."/>
            <person name="Ozaki K."/>
            <person name="Hirao M."/>
            <person name="Ohmori Y."/>
            <person name="Kawabata A."/>
            <person name="Hikiji T."/>
            <person name="Kobatake N."/>
            <person name="Inagaki H."/>
            <person name="Ikema Y."/>
            <person name="Okamoto S."/>
            <person name="Okitani R."/>
            <person name="Kawakami T."/>
            <person name="Noguchi S."/>
            <person name="Itoh T."/>
            <person name="Shigeta K."/>
            <person name="Senba T."/>
            <person name="Matsumura K."/>
            <person name="Nakajima Y."/>
            <person name="Mizuno T."/>
            <person name="Morinaga M."/>
            <person name="Sasaki M."/>
            <person name="Togashi T."/>
            <person name="Oyama M."/>
            <person name="Hata H."/>
            <person name="Watanabe M."/>
            <person name="Komatsu T."/>
            <person name="Mizushima-Sugano J."/>
            <person name="Satoh T."/>
            <person name="Shirai Y."/>
            <person name="Takahashi Y."/>
            <person name="Nakagawa K."/>
            <person name="Okumura K."/>
            <person name="Nagase T."/>
            <person name="Nomura N."/>
            <person name="Kikuchi H."/>
            <person name="Masuho Y."/>
            <person name="Yamashita R."/>
            <person name="Nakai K."/>
            <person name="Yada T."/>
            <person name="Nakamura Y."/>
            <person name="Ohara O."/>
            <person name="Isogai T."/>
            <person name="Sugano S."/>
        </authorList>
    </citation>
    <scope>NUCLEOTIDE SEQUENCE [LARGE SCALE MRNA]</scope>
    <source>
        <tissue>Thalamus</tissue>
    </source>
</reference>
<reference key="7">
    <citation type="submission" date="2005-07" db="EMBL/GenBank/DDBJ databases">
        <authorList>
            <person name="Mural R.J."/>
            <person name="Istrail S."/>
            <person name="Sutton G.G."/>
            <person name="Florea L."/>
            <person name="Halpern A.L."/>
            <person name="Mobarry C.M."/>
            <person name="Lippert R."/>
            <person name="Walenz B."/>
            <person name="Shatkay H."/>
            <person name="Dew I."/>
            <person name="Miller J.R."/>
            <person name="Flanigan M.J."/>
            <person name="Edwards N.J."/>
            <person name="Bolanos R."/>
            <person name="Fasulo D."/>
            <person name="Halldorsson B.V."/>
            <person name="Hannenhalli S."/>
            <person name="Turner R."/>
            <person name="Yooseph S."/>
            <person name="Lu F."/>
            <person name="Nusskern D.R."/>
            <person name="Shue B.C."/>
            <person name="Zheng X.H."/>
            <person name="Zhong F."/>
            <person name="Delcher A.L."/>
            <person name="Huson D.H."/>
            <person name="Kravitz S.A."/>
            <person name="Mouchard L."/>
            <person name="Reinert K."/>
            <person name="Remington K.A."/>
            <person name="Clark A.G."/>
            <person name="Waterman M.S."/>
            <person name="Eichler E.E."/>
            <person name="Adams M.D."/>
            <person name="Hunkapiller M.W."/>
            <person name="Myers E.W."/>
            <person name="Venter J.C."/>
        </authorList>
    </citation>
    <scope>NUCLEOTIDE SEQUENCE [LARGE SCALE GENOMIC DNA]</scope>
</reference>
<reference key="8">
    <citation type="journal article" date="2004" name="Genome Res.">
        <title>The status, quality, and expansion of the NIH full-length cDNA project: the Mammalian Gene Collection (MGC).</title>
        <authorList>
            <consortium name="The MGC Project Team"/>
        </authorList>
    </citation>
    <scope>NUCLEOTIDE SEQUENCE [LARGE SCALE MRNA]</scope>
</reference>
<reference key="9">
    <citation type="journal article" date="1999" name="Biochemistry">
        <title>Molecular complex of cholecystokinin-8 and N-terminus of the cholecystokinin A receptor by NMR spectroscopy.</title>
        <authorList>
            <person name="Pellegrini M."/>
            <person name="Mierke D.F."/>
        </authorList>
    </citation>
    <scope>STRUCTURE BY NMR OF 1-47 IN COMPLEX WITH CCK</scope>
</reference>
<reference key="10">
    <citation type="journal article" date="2001" name="Biochemistry">
        <title>Intermolecular interactions between cholecystokinin-8 and the third extracellular loop of the cholecystokinin A receptor.</title>
        <authorList>
            <person name="Giragossian C."/>
            <person name="Mierke D.F."/>
        </authorList>
    </citation>
    <scope>STRUCTURE BY NMR OF 329-357 IN COMPLEX WITH CCK</scope>
</reference>
<feature type="chain" id="PRO_0000069223" description="Cholecystokinin receptor type A">
    <location>
        <begin position="1"/>
        <end position="428"/>
    </location>
</feature>
<feature type="topological domain" description="Extracellular" evidence="2">
    <location>
        <begin position="1"/>
        <end position="41"/>
    </location>
</feature>
<feature type="transmembrane region" description="Helical; Name=1" evidence="2">
    <location>
        <begin position="42"/>
        <end position="67"/>
    </location>
</feature>
<feature type="topological domain" description="Cytoplasmic" evidence="2">
    <location>
        <begin position="68"/>
        <end position="77"/>
    </location>
</feature>
<feature type="transmembrane region" description="Helical; Name=2" evidence="2">
    <location>
        <begin position="78"/>
        <end position="104"/>
    </location>
</feature>
<feature type="topological domain" description="Extracellular" evidence="2">
    <location>
        <begin position="105"/>
        <end position="115"/>
    </location>
</feature>
<feature type="transmembrane region" description="Helical; Name=3" evidence="2">
    <location>
        <begin position="116"/>
        <end position="137"/>
    </location>
</feature>
<feature type="topological domain" description="Cytoplasmic" evidence="2">
    <location>
        <begin position="138"/>
        <end position="157"/>
    </location>
</feature>
<feature type="transmembrane region" description="Helical; Name=4" evidence="2">
    <location>
        <begin position="158"/>
        <end position="178"/>
    </location>
</feature>
<feature type="topological domain" description="Extracellular" evidence="2">
    <location>
        <begin position="179"/>
        <end position="210"/>
    </location>
</feature>
<feature type="transmembrane region" description="Helical; Name=5" evidence="2">
    <location>
        <begin position="211"/>
        <end position="234"/>
    </location>
</feature>
<feature type="topological domain" description="Cytoplasmic" evidence="2">
    <location>
        <begin position="235"/>
        <end position="313"/>
    </location>
</feature>
<feature type="transmembrane region" description="Helical; Name=6" evidence="2">
    <location>
        <begin position="314"/>
        <end position="334"/>
    </location>
</feature>
<feature type="topological domain" description="Extracellular" evidence="2">
    <location>
        <begin position="335"/>
        <end position="349"/>
    </location>
</feature>
<feature type="transmembrane region" description="Helical; Name=7" evidence="2">
    <location>
        <begin position="350"/>
        <end position="373"/>
    </location>
</feature>
<feature type="topological domain" description="Cytoplasmic" evidence="2">
    <location>
        <begin position="374"/>
        <end position="428"/>
    </location>
</feature>
<feature type="region of interest" description="Disordered" evidence="4">
    <location>
        <begin position="248"/>
        <end position="272"/>
    </location>
</feature>
<feature type="region of interest" description="Disordered" evidence="4">
    <location>
        <begin position="394"/>
        <end position="428"/>
    </location>
</feature>
<feature type="compositionally biased region" description="Polar residues" evidence="4">
    <location>
        <begin position="411"/>
        <end position="422"/>
    </location>
</feature>
<feature type="lipid moiety-binding region" description="S-palmitoyl cysteine" evidence="1">
    <location>
        <position position="387"/>
    </location>
</feature>
<feature type="glycosylation site" description="N-linked (GlcNAc...) asparagine" evidence="2">
    <location>
        <position position="10"/>
    </location>
</feature>
<feature type="glycosylation site" description="N-linked (GlcNAc...) asparagine" evidence="2">
    <location>
        <position position="24"/>
    </location>
</feature>
<feature type="glycosylation site" description="N-linked (GlcNAc...) asparagine" evidence="2">
    <location>
        <position position="190"/>
    </location>
</feature>
<feature type="disulfide bond" evidence="3">
    <location>
        <begin position="18"/>
        <end position="29"/>
    </location>
</feature>
<feature type="disulfide bond" evidence="3">
    <location>
        <begin position="114"/>
        <end position="196"/>
    </location>
</feature>
<feature type="turn" evidence="5">
    <location>
        <begin position="5"/>
        <end position="11"/>
    </location>
</feature>
<feature type="strand" evidence="5">
    <location>
        <begin position="13"/>
        <end position="15"/>
    </location>
</feature>
<feature type="strand" evidence="5">
    <location>
        <begin position="21"/>
        <end position="25"/>
    </location>
</feature>
<feature type="helix" evidence="7">
    <location>
        <begin position="40"/>
        <end position="68"/>
    </location>
</feature>
<feature type="helix" evidence="7">
    <location>
        <begin position="70"/>
        <end position="72"/>
    </location>
</feature>
<feature type="helix" evidence="7">
    <location>
        <begin position="75"/>
        <end position="104"/>
    </location>
</feature>
<feature type="helix" evidence="7">
    <location>
        <begin position="111"/>
        <end position="144"/>
    </location>
</feature>
<feature type="helix" evidence="7">
    <location>
        <begin position="146"/>
        <end position="152"/>
    </location>
</feature>
<feature type="helix" evidence="7">
    <location>
        <begin position="155"/>
        <end position="172"/>
    </location>
</feature>
<feature type="helix" evidence="7">
    <location>
        <begin position="175"/>
        <end position="179"/>
    </location>
</feature>
<feature type="strand" evidence="7">
    <location>
        <begin position="180"/>
        <end position="186"/>
    </location>
</feature>
<feature type="helix" evidence="6">
    <location>
        <begin position="188"/>
        <end position="190"/>
    </location>
</feature>
<feature type="strand" evidence="7">
    <location>
        <begin position="192"/>
        <end position="198"/>
    </location>
</feature>
<feature type="helix" evidence="7">
    <location>
        <begin position="203"/>
        <end position="217"/>
    </location>
</feature>
<feature type="helix" evidence="7">
    <location>
        <begin position="219"/>
        <end position="242"/>
    </location>
</feature>
<feature type="helix" evidence="7">
    <location>
        <begin position="304"/>
        <end position="338"/>
    </location>
</feature>
<feature type="helix" evidence="7">
    <location>
        <begin position="340"/>
        <end position="347"/>
    </location>
</feature>
<feature type="helix" evidence="7">
    <location>
        <begin position="350"/>
        <end position="360"/>
    </location>
</feature>
<feature type="helix" evidence="7">
    <location>
        <begin position="362"/>
        <end position="370"/>
    </location>
</feature>
<feature type="turn" evidence="7">
    <location>
        <begin position="371"/>
        <end position="373"/>
    </location>
</feature>
<feature type="helix" evidence="7">
    <location>
        <begin position="375"/>
        <end position="381"/>
    </location>
</feature>
<feature type="turn" evidence="7">
    <location>
        <begin position="382"/>
        <end position="384"/>
    </location>
</feature>
<name>CCKAR_HUMAN</name>
<keyword id="KW-0002">3D-structure</keyword>
<keyword id="KW-1003">Cell membrane</keyword>
<keyword id="KW-1015">Disulfide bond</keyword>
<keyword id="KW-0297">G-protein coupled receptor</keyword>
<keyword id="KW-0325">Glycoprotein</keyword>
<keyword id="KW-0449">Lipoprotein</keyword>
<keyword id="KW-0472">Membrane</keyword>
<keyword id="KW-0564">Palmitate</keyword>
<keyword id="KW-1267">Proteomics identification</keyword>
<keyword id="KW-0675">Receptor</keyword>
<keyword id="KW-1185">Reference proteome</keyword>
<keyword id="KW-0807">Transducer</keyword>
<keyword id="KW-0812">Transmembrane</keyword>
<keyword id="KW-1133">Transmembrane helix</keyword>
<proteinExistence type="evidence at protein level"/>
<organism>
    <name type="scientific">Homo sapiens</name>
    <name type="common">Human</name>
    <dbReference type="NCBI Taxonomy" id="9606"/>
    <lineage>
        <taxon>Eukaryota</taxon>
        <taxon>Metazoa</taxon>
        <taxon>Chordata</taxon>
        <taxon>Craniata</taxon>
        <taxon>Vertebrata</taxon>
        <taxon>Euteleostomi</taxon>
        <taxon>Mammalia</taxon>
        <taxon>Eutheria</taxon>
        <taxon>Euarchontoglires</taxon>
        <taxon>Primates</taxon>
        <taxon>Haplorrhini</taxon>
        <taxon>Catarrhini</taxon>
        <taxon>Hominidae</taxon>
        <taxon>Homo</taxon>
    </lineage>
</organism>
<gene>
    <name type="primary">CCKAR</name>
    <name type="synonym">CCKRA</name>
</gene>
<protein>
    <recommendedName>
        <fullName>Cholecystokinin receptor type A</fullName>
        <shortName>CCK-A receptor</shortName>
        <shortName>CCK-AR</shortName>
    </recommendedName>
    <alternativeName>
        <fullName>Cholecystokinin-1 receptor</fullName>
        <shortName>CCK1-R</shortName>
    </alternativeName>
</protein>
<evidence type="ECO:0000250" key="1"/>
<evidence type="ECO:0000255" key="2"/>
<evidence type="ECO:0000255" key="3">
    <source>
        <dbReference type="PROSITE-ProRule" id="PRU00521"/>
    </source>
</evidence>
<evidence type="ECO:0000256" key="4">
    <source>
        <dbReference type="SAM" id="MobiDB-lite"/>
    </source>
</evidence>
<evidence type="ECO:0007829" key="5">
    <source>
        <dbReference type="PDB" id="1D6G"/>
    </source>
</evidence>
<evidence type="ECO:0007829" key="6">
    <source>
        <dbReference type="PDB" id="7F8U"/>
    </source>
</evidence>
<evidence type="ECO:0007829" key="7">
    <source>
        <dbReference type="PDB" id="7MBX"/>
    </source>
</evidence>
<comment type="function">
    <text>Receptor for cholecystokinin. Mediates pancreatic growth and enzyme secretion, smooth muscle contraction of the gall bladder and stomach. Has a 1000-fold higher affinity for CCK rather than for gastrin. It modulates feeding and dopamine-induced behavior in the central and peripheral nervous system. This receptor mediates its action by association with G proteins that activate a phosphatidylinositol-calcium second messenger system.</text>
</comment>
<comment type="subcellular location">
    <subcellularLocation>
        <location>Cell membrane</location>
        <topology>Multi-pass membrane protein</topology>
    </subcellularLocation>
</comment>
<comment type="similarity">
    <text evidence="3">Belongs to the G-protein coupled receptor 1 family.</text>
</comment>
<comment type="online information" name="Wikipedia">
    <link uri="https://en.wikipedia.org/wiki/Cholecystokinin_receptor"/>
    <text>Cholecystokinin receptor entry</text>
</comment>
<sequence>MDVVDSLLVNGSNITPPCELGLENETLFCLDQPRPSKEWQPAVQILLYSLIFLLSVLGNTLVITVLIRNKRMRTVTNIFLLSLAVSDLMLCLFCMPFNLIPNLLKDFIFGSAVCKTTTYFMGTSVSVSTFNLVAISLERYGAICKPLQSRVWQTKSHALKVIAATWCLSFTIMTPYPIYSNLVPFTKNNNQTANMCRFLLPNDVMQQSWHTFLLLILFLIPGIVMMVAYGLISLELYQGIKFEASQKKSAKERKPSTTSSGKYEDSDGCYLQKTRPPRKLELRQLSTGSSSRANRIRSNSSAANLMAKKRVIRMLIVIVVLFFLCWMPIFSANAWRAYDTASAERRLSGTPISFILLLSYTSSCVNPIIYCFMNKRFRLGFMATFPCCPNPGPPGARGEVGEEEEGGTTGASLSRFSYSHMSASVPPQ</sequence>
<dbReference type="EMBL" id="L13605">
    <property type="protein sequence ID" value="AAA35659.1"/>
    <property type="molecule type" value="mRNA"/>
</dbReference>
<dbReference type="EMBL" id="L19315">
    <property type="protein sequence ID" value="AAA02819.1"/>
    <property type="molecule type" value="mRNA"/>
</dbReference>
<dbReference type="EMBL" id="U23430">
    <property type="protein sequence ID" value="AAA91123.1"/>
    <property type="molecule type" value="Genomic_DNA"/>
</dbReference>
<dbReference type="EMBL" id="U23427">
    <property type="protein sequence ID" value="AAA91123.1"/>
    <property type="status" value="JOINED"/>
    <property type="molecule type" value="Genomic_DNA"/>
</dbReference>
<dbReference type="EMBL" id="U23428">
    <property type="protein sequence ID" value="AAA91123.1"/>
    <property type="status" value="JOINED"/>
    <property type="molecule type" value="Genomic_DNA"/>
</dbReference>
<dbReference type="EMBL" id="U23429">
    <property type="protein sequence ID" value="AAA91123.1"/>
    <property type="status" value="JOINED"/>
    <property type="molecule type" value="Genomic_DNA"/>
</dbReference>
<dbReference type="EMBL" id="D85606">
    <property type="protein sequence ID" value="BAA90879.1"/>
    <property type="molecule type" value="Genomic_DNA"/>
</dbReference>
<dbReference type="EMBL" id="AY322549">
    <property type="protein sequence ID" value="AAP84362.1"/>
    <property type="molecule type" value="mRNA"/>
</dbReference>
<dbReference type="EMBL" id="AK313978">
    <property type="protein sequence ID" value="BAG36692.1"/>
    <property type="molecule type" value="mRNA"/>
</dbReference>
<dbReference type="EMBL" id="CH471069">
    <property type="protein sequence ID" value="EAW92850.1"/>
    <property type="molecule type" value="Genomic_DNA"/>
</dbReference>
<dbReference type="EMBL" id="BC074987">
    <property type="protein sequence ID" value="AAH74987.1"/>
    <property type="molecule type" value="mRNA"/>
</dbReference>
<dbReference type="CCDS" id="CCDS3438.1"/>
<dbReference type="PIR" id="JN0692">
    <property type="entry name" value="JN0692"/>
</dbReference>
<dbReference type="RefSeq" id="NP_000721.1">
    <property type="nucleotide sequence ID" value="NM_000730.3"/>
</dbReference>
<dbReference type="PDB" id="1D6G">
    <property type="method" value="NMR"/>
    <property type="chains" value="A=1-47"/>
</dbReference>
<dbReference type="PDB" id="1HZN">
    <property type="method" value="NMR"/>
    <property type="chains" value="A=329-357"/>
</dbReference>
<dbReference type="PDB" id="7EZH">
    <property type="method" value="EM"/>
    <property type="resolution" value="3.20 A"/>
    <property type="chains" value="D=1-428"/>
</dbReference>
<dbReference type="PDB" id="7EZK">
    <property type="method" value="EM"/>
    <property type="resolution" value="3.10 A"/>
    <property type="chains" value="D=1-428"/>
</dbReference>
<dbReference type="PDB" id="7EZM">
    <property type="method" value="EM"/>
    <property type="resolution" value="2.90 A"/>
    <property type="chains" value="D=1-428"/>
</dbReference>
<dbReference type="PDB" id="7F8U">
    <property type="method" value="X-ray"/>
    <property type="resolution" value="2.80 A"/>
    <property type="chains" value="A=37-240, A=302-375"/>
</dbReference>
<dbReference type="PDB" id="7F8X">
    <property type="method" value="X-ray"/>
    <property type="resolution" value="3.00 A"/>
    <property type="chains" value="A=2-240, A=302-406"/>
</dbReference>
<dbReference type="PDB" id="7F8Y">
    <property type="method" value="X-ray"/>
    <property type="resolution" value="2.50 A"/>
    <property type="chains" value="A=37-240, A=302-406"/>
</dbReference>
<dbReference type="PDB" id="7MBX">
    <property type="method" value="EM"/>
    <property type="resolution" value="1.95 A"/>
    <property type="chains" value="R=2-428"/>
</dbReference>
<dbReference type="PDB" id="7MBY">
    <property type="method" value="EM"/>
    <property type="resolution" value="2.44 A"/>
    <property type="chains" value="R=2-428"/>
</dbReference>
<dbReference type="PDB" id="7XOU">
    <property type="method" value="EM"/>
    <property type="resolution" value="3.20 A"/>
    <property type="chains" value="R=1-428"/>
</dbReference>
<dbReference type="PDB" id="7XOV">
    <property type="method" value="EM"/>
    <property type="resolution" value="3.00 A"/>
    <property type="chains" value="R=1-428"/>
</dbReference>
<dbReference type="PDB" id="9BKJ">
    <property type="method" value="EM"/>
    <property type="resolution" value="2.59 A"/>
    <property type="chains" value="R=2-428"/>
</dbReference>
<dbReference type="PDB" id="9BKK">
    <property type="method" value="EM"/>
    <property type="resolution" value="2.51 A"/>
    <property type="chains" value="R=2-428"/>
</dbReference>
<dbReference type="PDBsum" id="1D6G"/>
<dbReference type="PDBsum" id="1HZN"/>
<dbReference type="PDBsum" id="7EZH"/>
<dbReference type="PDBsum" id="7EZK"/>
<dbReference type="PDBsum" id="7EZM"/>
<dbReference type="PDBsum" id="7F8U"/>
<dbReference type="PDBsum" id="7F8X"/>
<dbReference type="PDBsum" id="7F8Y"/>
<dbReference type="PDBsum" id="7MBX"/>
<dbReference type="PDBsum" id="7MBY"/>
<dbReference type="PDBsum" id="7XOU"/>
<dbReference type="PDBsum" id="7XOV"/>
<dbReference type="PDBsum" id="9BKJ"/>
<dbReference type="PDBsum" id="9BKK"/>
<dbReference type="EMDB" id="EMD-23749"/>
<dbReference type="EMDB" id="EMD-23750"/>
<dbReference type="EMDB" id="EMD-31387"/>
<dbReference type="EMDB" id="EMD-31388"/>
<dbReference type="EMDB" id="EMD-31389"/>
<dbReference type="EMDB" id="EMD-33359"/>
<dbReference type="EMDB" id="EMD-33360"/>
<dbReference type="EMDB" id="EMD-44642"/>
<dbReference type="EMDB" id="EMD-44643"/>
<dbReference type="SMR" id="P32238"/>
<dbReference type="BioGRID" id="107328">
    <property type="interactions" value="1"/>
</dbReference>
<dbReference type="CORUM" id="P32238"/>
<dbReference type="FunCoup" id="P32238">
    <property type="interactions" value="605"/>
</dbReference>
<dbReference type="IntAct" id="P32238">
    <property type="interactions" value="1"/>
</dbReference>
<dbReference type="MINT" id="P32238"/>
<dbReference type="STRING" id="9606.ENSP00000295589"/>
<dbReference type="BindingDB" id="P32238"/>
<dbReference type="ChEMBL" id="CHEMBL1901"/>
<dbReference type="DrugBank" id="DB12694">
    <property type="generic name" value="CE-326597"/>
</dbReference>
<dbReference type="DrugBank" id="DB00403">
    <property type="generic name" value="Ceruletide"/>
</dbReference>
<dbReference type="DrugBank" id="DB08862">
    <property type="generic name" value="Cholecystokinin"/>
</dbReference>
<dbReference type="DrugBank" id="DB04856">
    <property type="generic name" value="Dexloxiglumide"/>
</dbReference>
<dbReference type="DrugBank" id="DB12309">
    <property type="generic name" value="GI-181771X"/>
</dbReference>
<dbReference type="DrugBank" id="DB04867">
    <property type="generic name" value="Lintitript"/>
</dbReference>
<dbReference type="DrugBank" id="DB13431">
    <property type="generic name" value="Proglumide"/>
</dbReference>
<dbReference type="DrugBank" id="DB09142">
    <property type="generic name" value="Sincalide"/>
</dbReference>
<dbReference type="DrugBank" id="DB06435">
    <property type="generic name" value="Tarazepide"/>
</dbReference>
<dbReference type="DrugCentral" id="P32238"/>
<dbReference type="GuidetoPHARMACOLOGY" id="76"/>
<dbReference type="GlyCosmos" id="P32238">
    <property type="glycosylation" value="3 sites, No reported glycans"/>
</dbReference>
<dbReference type="GlyGen" id="P32238">
    <property type="glycosylation" value="3 sites"/>
</dbReference>
<dbReference type="iPTMnet" id="P32238"/>
<dbReference type="PhosphoSitePlus" id="P32238"/>
<dbReference type="BioMuta" id="CCKAR"/>
<dbReference type="DMDM" id="416772"/>
<dbReference type="MassIVE" id="P32238"/>
<dbReference type="PaxDb" id="9606-ENSP00000295589"/>
<dbReference type="PeptideAtlas" id="P32238"/>
<dbReference type="ProteomicsDB" id="54844"/>
<dbReference type="Antibodypedia" id="3359">
    <property type="antibodies" value="437 antibodies from 37 providers"/>
</dbReference>
<dbReference type="DNASU" id="886"/>
<dbReference type="Ensembl" id="ENST00000295589.4">
    <property type="protein sequence ID" value="ENSP00000295589.3"/>
    <property type="gene ID" value="ENSG00000163394.6"/>
</dbReference>
<dbReference type="GeneID" id="886"/>
<dbReference type="KEGG" id="hsa:886"/>
<dbReference type="MANE-Select" id="ENST00000295589.4">
    <property type="protein sequence ID" value="ENSP00000295589.3"/>
    <property type="RefSeq nucleotide sequence ID" value="NM_000730.3"/>
    <property type="RefSeq protein sequence ID" value="NP_000721.1"/>
</dbReference>
<dbReference type="UCSC" id="uc003gse.2">
    <property type="organism name" value="human"/>
</dbReference>
<dbReference type="AGR" id="HGNC:1570"/>
<dbReference type="CTD" id="886"/>
<dbReference type="DisGeNET" id="886"/>
<dbReference type="GeneCards" id="CCKAR"/>
<dbReference type="HGNC" id="HGNC:1570">
    <property type="gene designation" value="CCKAR"/>
</dbReference>
<dbReference type="HPA" id="ENSG00000163394">
    <property type="expression patterns" value="Group enriched (gallbladder, stomach)"/>
</dbReference>
<dbReference type="MIM" id="118444">
    <property type="type" value="gene"/>
</dbReference>
<dbReference type="neXtProt" id="NX_P32238"/>
<dbReference type="OpenTargets" id="ENSG00000163394"/>
<dbReference type="PharmGKB" id="PA26142"/>
<dbReference type="VEuPathDB" id="HostDB:ENSG00000163394"/>
<dbReference type="eggNOG" id="KOG3656">
    <property type="taxonomic scope" value="Eukaryota"/>
</dbReference>
<dbReference type="GeneTree" id="ENSGT01130000278338"/>
<dbReference type="HOGENOM" id="CLU_009579_6_3_1"/>
<dbReference type="InParanoid" id="P32238"/>
<dbReference type="OMA" id="NIAPPCE"/>
<dbReference type="OrthoDB" id="5987936at2759"/>
<dbReference type="PAN-GO" id="P32238">
    <property type="GO annotations" value="4 GO annotations based on evolutionary models"/>
</dbReference>
<dbReference type="PhylomeDB" id="P32238"/>
<dbReference type="TreeFam" id="TF315303"/>
<dbReference type="PathwayCommons" id="P32238"/>
<dbReference type="Reactome" id="R-HSA-375276">
    <property type="pathway name" value="Peptide ligand-binding receptors"/>
</dbReference>
<dbReference type="Reactome" id="R-HSA-416476">
    <property type="pathway name" value="G alpha (q) signalling events"/>
</dbReference>
<dbReference type="SignaLink" id="P32238"/>
<dbReference type="SIGNOR" id="P32238"/>
<dbReference type="BioGRID-ORCS" id="886">
    <property type="hits" value="9 hits in 1152 CRISPR screens"/>
</dbReference>
<dbReference type="EvolutionaryTrace" id="P32238"/>
<dbReference type="GeneWiki" id="Cholecystokinin_A_receptor"/>
<dbReference type="GenomeRNAi" id="886"/>
<dbReference type="Pharos" id="P32238">
    <property type="development level" value="Tclin"/>
</dbReference>
<dbReference type="PRO" id="PR:P32238"/>
<dbReference type="Proteomes" id="UP000005640">
    <property type="component" value="Chromosome 4"/>
</dbReference>
<dbReference type="RNAct" id="P32238">
    <property type="molecule type" value="protein"/>
</dbReference>
<dbReference type="Bgee" id="ENSG00000163394">
    <property type="expression patterns" value="Expressed in gall bladder and 44 other cell types or tissues"/>
</dbReference>
<dbReference type="GO" id="GO:0005829">
    <property type="term" value="C:cytosol"/>
    <property type="evidence" value="ECO:0000314"/>
    <property type="project" value="HPA"/>
</dbReference>
<dbReference type="GO" id="GO:0016020">
    <property type="term" value="C:membrane"/>
    <property type="evidence" value="ECO:0000314"/>
    <property type="project" value="GO_Central"/>
</dbReference>
<dbReference type="GO" id="GO:0005654">
    <property type="term" value="C:nucleoplasm"/>
    <property type="evidence" value="ECO:0000314"/>
    <property type="project" value="HPA"/>
</dbReference>
<dbReference type="GO" id="GO:0005886">
    <property type="term" value="C:plasma membrane"/>
    <property type="evidence" value="ECO:0000314"/>
    <property type="project" value="HPA"/>
</dbReference>
<dbReference type="GO" id="GO:0004951">
    <property type="term" value="F:cholecystokinin receptor activity"/>
    <property type="evidence" value="ECO:0000314"/>
    <property type="project" value="GO_Central"/>
</dbReference>
<dbReference type="GO" id="GO:0017046">
    <property type="term" value="F:peptide hormone binding"/>
    <property type="evidence" value="ECO:0000353"/>
    <property type="project" value="GO_Central"/>
</dbReference>
<dbReference type="GO" id="GO:0007409">
    <property type="term" value="P:axonogenesis"/>
    <property type="evidence" value="ECO:0007669"/>
    <property type="project" value="Ensembl"/>
</dbReference>
<dbReference type="GO" id="GO:0032870">
    <property type="term" value="P:cellular response to hormone stimulus"/>
    <property type="evidence" value="ECO:0000318"/>
    <property type="project" value="GO_Central"/>
</dbReference>
<dbReference type="GO" id="GO:0038188">
    <property type="term" value="P:cholecystokinin signaling pathway"/>
    <property type="evidence" value="ECO:0000314"/>
    <property type="project" value="GO_Central"/>
</dbReference>
<dbReference type="GO" id="GO:0030900">
    <property type="term" value="P:forebrain development"/>
    <property type="evidence" value="ECO:0007669"/>
    <property type="project" value="Ensembl"/>
</dbReference>
<dbReference type="GO" id="GO:0007186">
    <property type="term" value="P:G protein-coupled receptor signaling pathway"/>
    <property type="evidence" value="ECO:0000318"/>
    <property type="project" value="GO_Central"/>
</dbReference>
<dbReference type="GO" id="GO:0001764">
    <property type="term" value="P:neuron migration"/>
    <property type="evidence" value="ECO:0007669"/>
    <property type="project" value="Ensembl"/>
</dbReference>
<dbReference type="GO" id="GO:0007200">
    <property type="term" value="P:phospholipase C-activating G protein-coupled receptor signaling pathway"/>
    <property type="evidence" value="ECO:0000304"/>
    <property type="project" value="ProtInc"/>
</dbReference>
<dbReference type="GO" id="GO:0046883">
    <property type="term" value="P:regulation of hormone secretion"/>
    <property type="evidence" value="ECO:0000318"/>
    <property type="project" value="GO_Central"/>
</dbReference>
<dbReference type="FunFam" id="1.20.1070.10:FF:000168">
    <property type="entry name" value="Cholecystokinin receptor type A"/>
    <property type="match status" value="1"/>
</dbReference>
<dbReference type="FunFam" id="1.20.1070.10:FF:000254">
    <property type="entry name" value="Cholecystokinin receptor type A"/>
    <property type="match status" value="1"/>
</dbReference>
<dbReference type="FunFam" id="4.10.670.10:FF:000001">
    <property type="entry name" value="cholecystokinin receptor type A"/>
    <property type="match status" value="1"/>
</dbReference>
<dbReference type="Gene3D" id="4.10.670.10">
    <property type="entry name" value="Cholecystokinin A receptor, N-terminal domain"/>
    <property type="match status" value="1"/>
</dbReference>
<dbReference type="Gene3D" id="1.20.1070.10">
    <property type="entry name" value="Rhodopsin 7-helix transmembrane proteins"/>
    <property type="match status" value="2"/>
</dbReference>
<dbReference type="InterPro" id="IPR009126">
    <property type="entry name" value="Cholcskin_rcpt"/>
</dbReference>
<dbReference type="InterPro" id="IPR000596">
    <property type="entry name" value="Cholcy_rcpt_A"/>
</dbReference>
<dbReference type="InterPro" id="IPR015276">
    <property type="entry name" value="CholecystokininA_recpt_N"/>
</dbReference>
<dbReference type="InterPro" id="IPR036472">
    <property type="entry name" value="CholecystokininA_recpt_N_sf"/>
</dbReference>
<dbReference type="InterPro" id="IPR000276">
    <property type="entry name" value="GPCR_Rhodpsn"/>
</dbReference>
<dbReference type="InterPro" id="IPR017452">
    <property type="entry name" value="GPCR_Rhodpsn_7TM"/>
</dbReference>
<dbReference type="PANTHER" id="PTHR24238:SF81">
    <property type="entry name" value="CHOLECYSTOKININ RECEPTOR TYPE A"/>
    <property type="match status" value="1"/>
</dbReference>
<dbReference type="PANTHER" id="PTHR24238">
    <property type="entry name" value="G-PROTEIN COUPLED RECEPTOR"/>
    <property type="match status" value="1"/>
</dbReference>
<dbReference type="Pfam" id="PF00001">
    <property type="entry name" value="7tm_1"/>
    <property type="match status" value="1"/>
</dbReference>
<dbReference type="Pfam" id="PF09193">
    <property type="entry name" value="CholecysA-Rec_N"/>
    <property type="match status" value="1"/>
</dbReference>
<dbReference type="PRINTS" id="PR01822">
    <property type="entry name" value="CCYSTOKININR"/>
</dbReference>
<dbReference type="PRINTS" id="PR00524">
    <property type="entry name" value="CCYSTOKNINAR"/>
</dbReference>
<dbReference type="PRINTS" id="PR00237">
    <property type="entry name" value="GPCRRHODOPSN"/>
</dbReference>
<dbReference type="SMART" id="SM01381">
    <property type="entry name" value="7TM_GPCR_Srsx"/>
    <property type="match status" value="1"/>
</dbReference>
<dbReference type="SUPFAM" id="SSF81321">
    <property type="entry name" value="Family A G protein-coupled receptor-like"/>
    <property type="match status" value="1"/>
</dbReference>
<dbReference type="PROSITE" id="PS00237">
    <property type="entry name" value="G_PROTEIN_RECEP_F1_1"/>
    <property type="match status" value="1"/>
</dbReference>
<dbReference type="PROSITE" id="PS50262">
    <property type="entry name" value="G_PROTEIN_RECEP_F1_2"/>
    <property type="match status" value="1"/>
</dbReference>
<accession>P32238</accession>
<accession>B2R9Z5</accession>